<accession>Q63SZ9</accession>
<reference key="1">
    <citation type="journal article" date="2004" name="Proc. Natl. Acad. Sci. U.S.A.">
        <title>Genomic plasticity of the causative agent of melioidosis, Burkholderia pseudomallei.</title>
        <authorList>
            <person name="Holden M.T.G."/>
            <person name="Titball R.W."/>
            <person name="Peacock S.J."/>
            <person name="Cerdeno-Tarraga A.-M."/>
            <person name="Atkins T."/>
            <person name="Crossman L.C."/>
            <person name="Pitt T."/>
            <person name="Churcher C."/>
            <person name="Mungall K.L."/>
            <person name="Bentley S.D."/>
            <person name="Sebaihia M."/>
            <person name="Thomson N.R."/>
            <person name="Bason N."/>
            <person name="Beacham I.R."/>
            <person name="Brooks K."/>
            <person name="Brown K.A."/>
            <person name="Brown N.F."/>
            <person name="Challis G.L."/>
            <person name="Cherevach I."/>
            <person name="Chillingworth T."/>
            <person name="Cronin A."/>
            <person name="Crossett B."/>
            <person name="Davis P."/>
            <person name="DeShazer D."/>
            <person name="Feltwell T."/>
            <person name="Fraser A."/>
            <person name="Hance Z."/>
            <person name="Hauser H."/>
            <person name="Holroyd S."/>
            <person name="Jagels K."/>
            <person name="Keith K.E."/>
            <person name="Maddison M."/>
            <person name="Moule S."/>
            <person name="Price C."/>
            <person name="Quail M.A."/>
            <person name="Rabbinowitsch E."/>
            <person name="Rutherford K."/>
            <person name="Sanders M."/>
            <person name="Simmonds M."/>
            <person name="Songsivilai S."/>
            <person name="Stevens K."/>
            <person name="Tumapa S."/>
            <person name="Vesaratchavest M."/>
            <person name="Whitehead S."/>
            <person name="Yeats C."/>
            <person name="Barrell B.G."/>
            <person name="Oyston P.C.F."/>
            <person name="Parkhill J."/>
        </authorList>
    </citation>
    <scope>NUCLEOTIDE SEQUENCE [LARGE SCALE GENOMIC DNA]</scope>
    <source>
        <strain>K96243</strain>
    </source>
</reference>
<comment type="function">
    <text evidence="1">Methylates large ribosomal subunit protein uL3 on a specific glutamine residue.</text>
</comment>
<comment type="catalytic activity">
    <reaction evidence="1">
        <text>L-glutaminyl-[ribosomal protein uL3] + S-adenosyl-L-methionine = N(5)-methyl-L-glutaminyl-[ribosomal protein uL3] + S-adenosyl-L-homocysteine + H(+)</text>
        <dbReference type="Rhea" id="RHEA:45020"/>
        <dbReference type="Rhea" id="RHEA-COMP:11063"/>
        <dbReference type="Rhea" id="RHEA-COMP:11064"/>
        <dbReference type="ChEBI" id="CHEBI:15378"/>
        <dbReference type="ChEBI" id="CHEBI:30011"/>
        <dbReference type="ChEBI" id="CHEBI:57856"/>
        <dbReference type="ChEBI" id="CHEBI:59789"/>
        <dbReference type="ChEBI" id="CHEBI:61891"/>
        <dbReference type="EC" id="2.1.1.298"/>
    </reaction>
</comment>
<comment type="similarity">
    <text evidence="1">Belongs to the protein N5-glutamine methyltransferase family. PrmB subfamily.</text>
</comment>
<feature type="chain" id="PRO_0000414178" description="Ribosomal protein uL3 glutamine methyltransferase">
    <location>
        <begin position="1"/>
        <end position="307"/>
    </location>
</feature>
<dbReference type="EC" id="2.1.1.298" evidence="1"/>
<dbReference type="EMBL" id="BX571965">
    <property type="protein sequence ID" value="CAH36174.1"/>
    <property type="molecule type" value="Genomic_DNA"/>
</dbReference>
<dbReference type="RefSeq" id="WP_004192731.1">
    <property type="nucleotide sequence ID" value="NZ_CP009538.1"/>
</dbReference>
<dbReference type="RefSeq" id="YP_108767.1">
    <property type="nucleotide sequence ID" value="NC_006350.1"/>
</dbReference>
<dbReference type="SMR" id="Q63SZ9"/>
<dbReference type="STRING" id="272560.BPSL2172"/>
<dbReference type="GeneID" id="93060713"/>
<dbReference type="KEGG" id="bps:BPSL2172"/>
<dbReference type="PATRIC" id="fig|272560.51.peg.3278"/>
<dbReference type="eggNOG" id="COG2890">
    <property type="taxonomic scope" value="Bacteria"/>
</dbReference>
<dbReference type="Proteomes" id="UP000000605">
    <property type="component" value="Chromosome 1"/>
</dbReference>
<dbReference type="GO" id="GO:0005829">
    <property type="term" value="C:cytosol"/>
    <property type="evidence" value="ECO:0007669"/>
    <property type="project" value="TreeGrafter"/>
</dbReference>
<dbReference type="GO" id="GO:0003676">
    <property type="term" value="F:nucleic acid binding"/>
    <property type="evidence" value="ECO:0007669"/>
    <property type="project" value="InterPro"/>
</dbReference>
<dbReference type="GO" id="GO:0036009">
    <property type="term" value="F:protein-glutamine N-methyltransferase activity"/>
    <property type="evidence" value="ECO:0007669"/>
    <property type="project" value="UniProtKB-UniRule"/>
</dbReference>
<dbReference type="GO" id="GO:0032259">
    <property type="term" value="P:methylation"/>
    <property type="evidence" value="ECO:0007669"/>
    <property type="project" value="UniProtKB-KW"/>
</dbReference>
<dbReference type="CDD" id="cd02440">
    <property type="entry name" value="AdoMet_MTases"/>
    <property type="match status" value="1"/>
</dbReference>
<dbReference type="Gene3D" id="1.10.8.10">
    <property type="entry name" value="DNA helicase RuvA subunit, C-terminal domain"/>
    <property type="match status" value="1"/>
</dbReference>
<dbReference type="Gene3D" id="3.40.50.150">
    <property type="entry name" value="Vaccinia Virus protein VP39"/>
    <property type="match status" value="1"/>
</dbReference>
<dbReference type="HAMAP" id="MF_02125">
    <property type="entry name" value="L3_methyltr_PrmB"/>
    <property type="match status" value="1"/>
</dbReference>
<dbReference type="InterPro" id="IPR002052">
    <property type="entry name" value="DNA_methylase_N6_adenine_CS"/>
</dbReference>
<dbReference type="InterPro" id="IPR004556">
    <property type="entry name" value="HemK-like"/>
</dbReference>
<dbReference type="InterPro" id="IPR017127">
    <property type="entry name" value="Ribosome_uL3_MTase"/>
</dbReference>
<dbReference type="InterPro" id="IPR029063">
    <property type="entry name" value="SAM-dependent_MTases_sf"/>
</dbReference>
<dbReference type="InterPro" id="IPR007848">
    <property type="entry name" value="Small_mtfrase_dom"/>
</dbReference>
<dbReference type="NCBIfam" id="TIGR00536">
    <property type="entry name" value="hemK_fam"/>
    <property type="match status" value="1"/>
</dbReference>
<dbReference type="NCBIfam" id="TIGR03533">
    <property type="entry name" value="L3_gln_methyl"/>
    <property type="match status" value="1"/>
</dbReference>
<dbReference type="PANTHER" id="PTHR47806">
    <property type="entry name" value="50S RIBOSOMAL PROTEIN L3 GLUTAMINE METHYLTRANSFERASE"/>
    <property type="match status" value="1"/>
</dbReference>
<dbReference type="PANTHER" id="PTHR47806:SF1">
    <property type="entry name" value="RIBOSOMAL PROTEIN UL3 GLUTAMINE METHYLTRANSFERASE"/>
    <property type="match status" value="1"/>
</dbReference>
<dbReference type="Pfam" id="PF05175">
    <property type="entry name" value="MTS"/>
    <property type="match status" value="1"/>
</dbReference>
<dbReference type="PIRSF" id="PIRSF037167">
    <property type="entry name" value="Mtase_YfcB_prd"/>
    <property type="match status" value="1"/>
</dbReference>
<dbReference type="SUPFAM" id="SSF53335">
    <property type="entry name" value="S-adenosyl-L-methionine-dependent methyltransferases"/>
    <property type="match status" value="1"/>
</dbReference>
<sequence length="307" mass="33508">MTTSPTPFKTVRDLVRHAVSRFSQAKLAFGHGSDNAFDEAVYLVLHTLHLPLDTLEPFLDARLAPDEIDAVLAVIERRATERVPAAYLTREAWMHGHRFYVDERVIVPRSFIGELLDDGLQPYVEDPELVGSVLELCTGSGCLAILAALAFPNASVDAVDLSADALAVAKINRDNYGLDERIALYHGDLYAPLPQFKWIDPAQRYDVIIANPPYVNAGSMAELPAEYRHEPEMALAGGADGMDIVRRIIGEARRWLQDDGVLVVEIGNERANVEAAFGGLELVWLPTSAGDGSVFLIHASELPAVAG</sequence>
<name>PRMB_BURPS</name>
<evidence type="ECO:0000255" key="1">
    <source>
        <dbReference type="HAMAP-Rule" id="MF_02125"/>
    </source>
</evidence>
<keyword id="KW-0489">Methyltransferase</keyword>
<keyword id="KW-1185">Reference proteome</keyword>
<keyword id="KW-0949">S-adenosyl-L-methionine</keyword>
<keyword id="KW-0808">Transferase</keyword>
<organism>
    <name type="scientific">Burkholderia pseudomallei (strain K96243)</name>
    <dbReference type="NCBI Taxonomy" id="272560"/>
    <lineage>
        <taxon>Bacteria</taxon>
        <taxon>Pseudomonadati</taxon>
        <taxon>Pseudomonadota</taxon>
        <taxon>Betaproteobacteria</taxon>
        <taxon>Burkholderiales</taxon>
        <taxon>Burkholderiaceae</taxon>
        <taxon>Burkholderia</taxon>
        <taxon>pseudomallei group</taxon>
    </lineage>
</organism>
<gene>
    <name evidence="1" type="primary">prmB</name>
    <name type="ordered locus">BPSL2172</name>
</gene>
<proteinExistence type="inferred from homology"/>
<protein>
    <recommendedName>
        <fullName evidence="1">Ribosomal protein uL3 glutamine methyltransferase</fullName>
        <shortName evidence="1">uL3 MTase</shortName>
        <ecNumber evidence="1">2.1.1.298</ecNumber>
    </recommendedName>
    <alternativeName>
        <fullName evidence="1">N5-glutamine methyltransferase PrmB</fullName>
    </alternativeName>
</protein>